<keyword id="KW-0328">Glycosyltransferase</keyword>
<keyword id="KW-0460">Magnesium</keyword>
<keyword id="KW-0665">Pyrimidine biosynthesis</keyword>
<keyword id="KW-1185">Reference proteome</keyword>
<keyword id="KW-0808">Transferase</keyword>
<organism>
    <name type="scientific">Photorhabdus laumondii subsp. laumondii (strain DSM 15139 / CIP 105565 / TT01)</name>
    <name type="common">Photorhabdus luminescens subsp. laumondii</name>
    <dbReference type="NCBI Taxonomy" id="243265"/>
    <lineage>
        <taxon>Bacteria</taxon>
        <taxon>Pseudomonadati</taxon>
        <taxon>Pseudomonadota</taxon>
        <taxon>Gammaproteobacteria</taxon>
        <taxon>Enterobacterales</taxon>
        <taxon>Morganellaceae</taxon>
        <taxon>Photorhabdus</taxon>
    </lineage>
</organism>
<feature type="chain" id="PRO_0000110719" description="Orotate phosphoribosyltransferase">
    <location>
        <begin position="1"/>
        <end position="213"/>
    </location>
</feature>
<feature type="binding site" description="in other chain" evidence="1">
    <location>
        <position position="26"/>
    </location>
    <ligand>
        <name>5-phospho-alpha-D-ribose 1-diphosphate</name>
        <dbReference type="ChEBI" id="CHEBI:58017"/>
        <note>ligand shared between dimeric partners</note>
    </ligand>
</feature>
<feature type="binding site" evidence="1">
    <location>
        <begin position="34"/>
        <end position="35"/>
    </location>
    <ligand>
        <name>orotate</name>
        <dbReference type="ChEBI" id="CHEBI:30839"/>
    </ligand>
</feature>
<feature type="binding site" description="in other chain" evidence="1">
    <location>
        <begin position="72"/>
        <end position="73"/>
    </location>
    <ligand>
        <name>5-phospho-alpha-D-ribose 1-diphosphate</name>
        <dbReference type="ChEBI" id="CHEBI:58017"/>
        <note>ligand shared between dimeric partners</note>
    </ligand>
</feature>
<feature type="binding site" evidence="1">
    <location>
        <position position="99"/>
    </location>
    <ligand>
        <name>5-phospho-alpha-D-ribose 1-diphosphate</name>
        <dbReference type="ChEBI" id="CHEBI:58017"/>
        <note>ligand shared between dimeric partners</note>
    </ligand>
</feature>
<feature type="binding site" description="in other chain" evidence="1">
    <location>
        <position position="100"/>
    </location>
    <ligand>
        <name>5-phospho-alpha-D-ribose 1-diphosphate</name>
        <dbReference type="ChEBI" id="CHEBI:58017"/>
        <note>ligand shared between dimeric partners</note>
    </ligand>
</feature>
<feature type="binding site" evidence="1">
    <location>
        <position position="103"/>
    </location>
    <ligand>
        <name>5-phospho-alpha-D-ribose 1-diphosphate</name>
        <dbReference type="ChEBI" id="CHEBI:58017"/>
        <note>ligand shared between dimeric partners</note>
    </ligand>
</feature>
<feature type="binding site" evidence="1">
    <location>
        <position position="105"/>
    </location>
    <ligand>
        <name>5-phospho-alpha-D-ribose 1-diphosphate</name>
        <dbReference type="ChEBI" id="CHEBI:58017"/>
        <note>ligand shared between dimeric partners</note>
    </ligand>
</feature>
<feature type="binding site" description="in other chain" evidence="1">
    <location>
        <begin position="124"/>
        <end position="132"/>
    </location>
    <ligand>
        <name>5-phospho-alpha-D-ribose 1-diphosphate</name>
        <dbReference type="ChEBI" id="CHEBI:58017"/>
        <note>ligand shared between dimeric partners</note>
    </ligand>
</feature>
<feature type="binding site" evidence="1">
    <location>
        <position position="128"/>
    </location>
    <ligand>
        <name>orotate</name>
        <dbReference type="ChEBI" id="CHEBI:30839"/>
    </ligand>
</feature>
<feature type="binding site" evidence="1">
    <location>
        <position position="156"/>
    </location>
    <ligand>
        <name>orotate</name>
        <dbReference type="ChEBI" id="CHEBI:30839"/>
    </ligand>
</feature>
<sequence>MKAYQREFIELALKKQVLKFGEFTLKSGRKSPYFFNAGLFNTGRDLALIGRFYAAALLDSGIQCDLLFGPAYKGIPIATTTAVALAEHHDIDMPYCFNRKEAKDHGEGGTLVGSPLKGNVVLVDDVITAGTAIRESMEIIKQHNATLAGVMICLDRQERGNGEISAIQEVERDYGCKVFSIITLNDLINYLSGQPEMKDHLDAVKAYRAQYGI</sequence>
<evidence type="ECO:0000255" key="1">
    <source>
        <dbReference type="HAMAP-Rule" id="MF_01208"/>
    </source>
</evidence>
<gene>
    <name evidence="1" type="primary">pyrE</name>
    <name type="ordered locus">plu4869</name>
</gene>
<dbReference type="EC" id="2.4.2.10" evidence="1"/>
<dbReference type="EMBL" id="BX571875">
    <property type="protein sequence ID" value="CAE17241.1"/>
    <property type="molecule type" value="Genomic_DNA"/>
</dbReference>
<dbReference type="RefSeq" id="WP_011148926.1">
    <property type="nucleotide sequence ID" value="NC_005126.1"/>
</dbReference>
<dbReference type="SMR" id="Q7MY25"/>
<dbReference type="STRING" id="243265.plu4869"/>
<dbReference type="GeneID" id="48851098"/>
<dbReference type="KEGG" id="plu:plu4869"/>
<dbReference type="eggNOG" id="COG0461">
    <property type="taxonomic scope" value="Bacteria"/>
</dbReference>
<dbReference type="HOGENOM" id="CLU_074878_0_1_6"/>
<dbReference type="OrthoDB" id="9779060at2"/>
<dbReference type="UniPathway" id="UPA00070">
    <property type="reaction ID" value="UER00119"/>
</dbReference>
<dbReference type="Proteomes" id="UP000002514">
    <property type="component" value="Chromosome"/>
</dbReference>
<dbReference type="GO" id="GO:0005737">
    <property type="term" value="C:cytoplasm"/>
    <property type="evidence" value="ECO:0007669"/>
    <property type="project" value="TreeGrafter"/>
</dbReference>
<dbReference type="GO" id="GO:0000287">
    <property type="term" value="F:magnesium ion binding"/>
    <property type="evidence" value="ECO:0007669"/>
    <property type="project" value="UniProtKB-UniRule"/>
</dbReference>
<dbReference type="GO" id="GO:0004588">
    <property type="term" value="F:orotate phosphoribosyltransferase activity"/>
    <property type="evidence" value="ECO:0007669"/>
    <property type="project" value="UniProtKB-UniRule"/>
</dbReference>
<dbReference type="GO" id="GO:0006207">
    <property type="term" value="P:'de novo' pyrimidine nucleobase biosynthetic process"/>
    <property type="evidence" value="ECO:0007669"/>
    <property type="project" value="TreeGrafter"/>
</dbReference>
<dbReference type="GO" id="GO:0044205">
    <property type="term" value="P:'de novo' UMP biosynthetic process"/>
    <property type="evidence" value="ECO:0007669"/>
    <property type="project" value="UniProtKB-UniRule"/>
</dbReference>
<dbReference type="GO" id="GO:0046132">
    <property type="term" value="P:pyrimidine ribonucleoside biosynthetic process"/>
    <property type="evidence" value="ECO:0007669"/>
    <property type="project" value="TreeGrafter"/>
</dbReference>
<dbReference type="CDD" id="cd06223">
    <property type="entry name" value="PRTases_typeI"/>
    <property type="match status" value="1"/>
</dbReference>
<dbReference type="FunFam" id="3.40.50.2020:FF:000008">
    <property type="entry name" value="Orotate phosphoribosyltransferase"/>
    <property type="match status" value="1"/>
</dbReference>
<dbReference type="Gene3D" id="3.40.50.2020">
    <property type="match status" value="1"/>
</dbReference>
<dbReference type="HAMAP" id="MF_01208">
    <property type="entry name" value="PyrE"/>
    <property type="match status" value="1"/>
</dbReference>
<dbReference type="InterPro" id="IPR023031">
    <property type="entry name" value="OPRT"/>
</dbReference>
<dbReference type="InterPro" id="IPR004467">
    <property type="entry name" value="Or_phspho_trans_dom"/>
</dbReference>
<dbReference type="InterPro" id="IPR000836">
    <property type="entry name" value="PRibTrfase_dom"/>
</dbReference>
<dbReference type="InterPro" id="IPR029057">
    <property type="entry name" value="PRTase-like"/>
</dbReference>
<dbReference type="NCBIfam" id="TIGR00336">
    <property type="entry name" value="pyrE"/>
    <property type="match status" value="1"/>
</dbReference>
<dbReference type="PANTHER" id="PTHR46683">
    <property type="entry name" value="OROTATE PHOSPHORIBOSYLTRANSFERASE 1-RELATED"/>
    <property type="match status" value="1"/>
</dbReference>
<dbReference type="PANTHER" id="PTHR46683:SF1">
    <property type="entry name" value="OROTATE PHOSPHORIBOSYLTRANSFERASE 1-RELATED"/>
    <property type="match status" value="1"/>
</dbReference>
<dbReference type="Pfam" id="PF00156">
    <property type="entry name" value="Pribosyltran"/>
    <property type="match status" value="1"/>
</dbReference>
<dbReference type="SUPFAM" id="SSF53271">
    <property type="entry name" value="PRTase-like"/>
    <property type="match status" value="1"/>
</dbReference>
<dbReference type="PROSITE" id="PS00103">
    <property type="entry name" value="PUR_PYR_PR_TRANSFER"/>
    <property type="match status" value="1"/>
</dbReference>
<name>PYRE_PHOLL</name>
<reference key="1">
    <citation type="journal article" date="2003" name="Nat. Biotechnol.">
        <title>The genome sequence of the entomopathogenic bacterium Photorhabdus luminescens.</title>
        <authorList>
            <person name="Duchaud E."/>
            <person name="Rusniok C."/>
            <person name="Frangeul L."/>
            <person name="Buchrieser C."/>
            <person name="Givaudan A."/>
            <person name="Taourit S."/>
            <person name="Bocs S."/>
            <person name="Boursaux-Eude C."/>
            <person name="Chandler M."/>
            <person name="Charles J.-F."/>
            <person name="Dassa E."/>
            <person name="Derose R."/>
            <person name="Derzelle S."/>
            <person name="Freyssinet G."/>
            <person name="Gaudriault S."/>
            <person name="Medigue C."/>
            <person name="Lanois A."/>
            <person name="Powell K."/>
            <person name="Siguier P."/>
            <person name="Vincent R."/>
            <person name="Wingate V."/>
            <person name="Zouine M."/>
            <person name="Glaser P."/>
            <person name="Boemare N."/>
            <person name="Danchin A."/>
            <person name="Kunst F."/>
        </authorList>
    </citation>
    <scope>NUCLEOTIDE SEQUENCE [LARGE SCALE GENOMIC DNA]</scope>
    <source>
        <strain>DSM 15139 / CIP 105565 / TT01</strain>
    </source>
</reference>
<protein>
    <recommendedName>
        <fullName evidence="1">Orotate phosphoribosyltransferase</fullName>
        <shortName evidence="1">OPRT</shortName>
        <shortName evidence="1">OPRTase</shortName>
        <ecNumber evidence="1">2.4.2.10</ecNumber>
    </recommendedName>
</protein>
<comment type="function">
    <text evidence="1">Catalyzes the transfer of a ribosyl phosphate group from 5-phosphoribose 1-diphosphate to orotate, leading to the formation of orotidine monophosphate (OMP).</text>
</comment>
<comment type="catalytic activity">
    <reaction evidence="1">
        <text>orotidine 5'-phosphate + diphosphate = orotate + 5-phospho-alpha-D-ribose 1-diphosphate</text>
        <dbReference type="Rhea" id="RHEA:10380"/>
        <dbReference type="ChEBI" id="CHEBI:30839"/>
        <dbReference type="ChEBI" id="CHEBI:33019"/>
        <dbReference type="ChEBI" id="CHEBI:57538"/>
        <dbReference type="ChEBI" id="CHEBI:58017"/>
        <dbReference type="EC" id="2.4.2.10"/>
    </reaction>
</comment>
<comment type="cofactor">
    <cofactor evidence="1">
        <name>Mg(2+)</name>
        <dbReference type="ChEBI" id="CHEBI:18420"/>
    </cofactor>
</comment>
<comment type="pathway">
    <text evidence="1">Pyrimidine metabolism; UMP biosynthesis via de novo pathway; UMP from orotate: step 1/2.</text>
</comment>
<comment type="subunit">
    <text evidence="1">Homodimer.</text>
</comment>
<comment type="similarity">
    <text evidence="1">Belongs to the purine/pyrimidine phosphoribosyltransferase family. PyrE subfamily.</text>
</comment>
<proteinExistence type="inferred from homology"/>
<accession>Q7MY25</accession>